<protein>
    <recommendedName>
        <fullName evidence="1">ATP synthase subunit b</fullName>
    </recommendedName>
    <alternativeName>
        <fullName evidence="1">ATP synthase F(0) sector subunit b</fullName>
    </alternativeName>
    <alternativeName>
        <fullName evidence="1">ATPase subunit I</fullName>
    </alternativeName>
    <alternativeName>
        <fullName evidence="1">F-type ATPase subunit b</fullName>
        <shortName evidence="1">F-ATPase subunit b</shortName>
    </alternativeName>
</protein>
<organism>
    <name type="scientific">Amoebophilus asiaticus (strain 5a2)</name>
    <dbReference type="NCBI Taxonomy" id="452471"/>
    <lineage>
        <taxon>Bacteria</taxon>
        <taxon>Pseudomonadati</taxon>
        <taxon>Bacteroidota</taxon>
        <taxon>Cytophagia</taxon>
        <taxon>Cytophagales</taxon>
        <taxon>Amoebophilaceae</taxon>
        <taxon>Candidatus Amoebophilus</taxon>
    </lineage>
</organism>
<dbReference type="EMBL" id="CP001102">
    <property type="protein sequence ID" value="ACE05515.1"/>
    <property type="molecule type" value="Genomic_DNA"/>
</dbReference>
<dbReference type="RefSeq" id="WP_012472287.1">
    <property type="nucleotide sequence ID" value="NC_010830.1"/>
</dbReference>
<dbReference type="SMR" id="B3EU96"/>
<dbReference type="STRING" id="452471.Aasi_0063"/>
<dbReference type="KEGG" id="aas:Aasi_0063"/>
<dbReference type="eggNOG" id="COG0711">
    <property type="taxonomic scope" value="Bacteria"/>
</dbReference>
<dbReference type="HOGENOM" id="CLU_079215_4_1_10"/>
<dbReference type="OrthoDB" id="9795289at2"/>
<dbReference type="Proteomes" id="UP000001227">
    <property type="component" value="Chromosome"/>
</dbReference>
<dbReference type="GO" id="GO:0005886">
    <property type="term" value="C:plasma membrane"/>
    <property type="evidence" value="ECO:0007669"/>
    <property type="project" value="UniProtKB-SubCell"/>
</dbReference>
<dbReference type="GO" id="GO:0045259">
    <property type="term" value="C:proton-transporting ATP synthase complex"/>
    <property type="evidence" value="ECO:0007669"/>
    <property type="project" value="UniProtKB-KW"/>
</dbReference>
<dbReference type="GO" id="GO:0046933">
    <property type="term" value="F:proton-transporting ATP synthase activity, rotational mechanism"/>
    <property type="evidence" value="ECO:0007669"/>
    <property type="project" value="UniProtKB-UniRule"/>
</dbReference>
<dbReference type="GO" id="GO:0046961">
    <property type="term" value="F:proton-transporting ATPase activity, rotational mechanism"/>
    <property type="evidence" value="ECO:0007669"/>
    <property type="project" value="TreeGrafter"/>
</dbReference>
<dbReference type="CDD" id="cd06503">
    <property type="entry name" value="ATP-synt_Fo_b"/>
    <property type="match status" value="1"/>
</dbReference>
<dbReference type="HAMAP" id="MF_01398">
    <property type="entry name" value="ATP_synth_b_bprime"/>
    <property type="match status" value="1"/>
</dbReference>
<dbReference type="InterPro" id="IPR028987">
    <property type="entry name" value="ATP_synth_B-like_membr_sf"/>
</dbReference>
<dbReference type="InterPro" id="IPR002146">
    <property type="entry name" value="ATP_synth_b/b'su_bac/chlpt"/>
</dbReference>
<dbReference type="InterPro" id="IPR005864">
    <property type="entry name" value="ATP_synth_F0_bsu_bac"/>
</dbReference>
<dbReference type="InterPro" id="IPR050059">
    <property type="entry name" value="ATP_synthase_B_chain"/>
</dbReference>
<dbReference type="NCBIfam" id="TIGR01144">
    <property type="entry name" value="ATP_synt_b"/>
    <property type="match status" value="1"/>
</dbReference>
<dbReference type="PANTHER" id="PTHR33445:SF1">
    <property type="entry name" value="ATP SYNTHASE SUBUNIT B"/>
    <property type="match status" value="1"/>
</dbReference>
<dbReference type="PANTHER" id="PTHR33445">
    <property type="entry name" value="ATP SYNTHASE SUBUNIT B', CHLOROPLASTIC"/>
    <property type="match status" value="1"/>
</dbReference>
<dbReference type="Pfam" id="PF00430">
    <property type="entry name" value="ATP-synt_B"/>
    <property type="match status" value="1"/>
</dbReference>
<dbReference type="SUPFAM" id="SSF81573">
    <property type="entry name" value="F1F0 ATP synthase subunit B, membrane domain"/>
    <property type="match status" value="1"/>
</dbReference>
<comment type="function">
    <text evidence="1">F(1)F(0) ATP synthase produces ATP from ADP in the presence of a proton or sodium gradient. F-type ATPases consist of two structural domains, F(1) containing the extramembraneous catalytic core and F(0) containing the membrane proton channel, linked together by a central stalk and a peripheral stalk. During catalysis, ATP synthesis in the catalytic domain of F(1) is coupled via a rotary mechanism of the central stalk subunits to proton translocation.</text>
</comment>
<comment type="function">
    <text evidence="1">Component of the F(0) channel, it forms part of the peripheral stalk, linking F(1) to F(0).</text>
</comment>
<comment type="subunit">
    <text evidence="1">F-type ATPases have 2 components, F(1) - the catalytic core - and F(0) - the membrane proton channel. F(1) has five subunits: alpha(3), beta(3), gamma(1), delta(1), epsilon(1). F(0) has three main subunits: a(1), b(2) and c(10-14). The alpha and beta chains form an alternating ring which encloses part of the gamma chain. F(1) is attached to F(0) by a central stalk formed by the gamma and epsilon chains, while a peripheral stalk is formed by the delta and b chains.</text>
</comment>
<comment type="subcellular location">
    <subcellularLocation>
        <location evidence="1">Cell membrane</location>
        <topology evidence="1">Single-pass membrane protein</topology>
    </subcellularLocation>
</comment>
<comment type="similarity">
    <text evidence="1">Belongs to the ATPase B chain family.</text>
</comment>
<sequence length="164" mass="19078">MDLITPDFGIIFWQTITLLFVLFILGKFGWKPILQTLKKRETHIEEALKGAEEAKQLLAQLKSEQEKLLEKSNREREKIISDAVATKNDILETAQMEARQLSDKVLKEAREVINTEKEIAFGKLKHEIFLISVQVAEKLLEKELNTENKQEELVRRLIKETHLN</sequence>
<feature type="chain" id="PRO_0000368308" description="ATP synthase subunit b">
    <location>
        <begin position="1"/>
        <end position="164"/>
    </location>
</feature>
<feature type="transmembrane region" description="Helical" evidence="1">
    <location>
        <begin position="8"/>
        <end position="28"/>
    </location>
</feature>
<name>ATPF_AMOA5</name>
<gene>
    <name evidence="1" type="primary">atpF</name>
    <name type="ordered locus">Aasi_0063</name>
</gene>
<keyword id="KW-0066">ATP synthesis</keyword>
<keyword id="KW-1003">Cell membrane</keyword>
<keyword id="KW-0138">CF(0)</keyword>
<keyword id="KW-0375">Hydrogen ion transport</keyword>
<keyword id="KW-0406">Ion transport</keyword>
<keyword id="KW-0472">Membrane</keyword>
<keyword id="KW-1185">Reference proteome</keyword>
<keyword id="KW-0812">Transmembrane</keyword>
<keyword id="KW-1133">Transmembrane helix</keyword>
<keyword id="KW-0813">Transport</keyword>
<accession>B3EU96</accession>
<reference key="1">
    <citation type="journal article" date="2010" name="J. Bacteriol.">
        <title>The genome of the amoeba symbiont 'Candidatus Amoebophilus asiaticus' reveals common mechanisms for host cell interaction among amoeba-associated bacteria.</title>
        <authorList>
            <person name="Schmitz-Esser S."/>
            <person name="Tischler P."/>
            <person name="Arnold R."/>
            <person name="Montanaro J."/>
            <person name="Wagner M."/>
            <person name="Rattei T."/>
            <person name="Horn M."/>
        </authorList>
    </citation>
    <scope>NUCLEOTIDE SEQUENCE [LARGE SCALE GENOMIC DNA]</scope>
    <source>
        <strain>5a2</strain>
    </source>
</reference>
<proteinExistence type="inferred from homology"/>
<evidence type="ECO:0000255" key="1">
    <source>
        <dbReference type="HAMAP-Rule" id="MF_01398"/>
    </source>
</evidence>